<evidence type="ECO:0000250" key="1"/>
<evidence type="ECO:0000250" key="2">
    <source>
        <dbReference type="UniProtKB" id="Q62191"/>
    </source>
</evidence>
<evidence type="ECO:0000255" key="3"/>
<evidence type="ECO:0000255" key="4">
    <source>
        <dbReference type="PROSITE-ProRule" id="PRU00024"/>
    </source>
</evidence>
<evidence type="ECO:0000255" key="5">
    <source>
        <dbReference type="PROSITE-ProRule" id="PRU00175"/>
    </source>
</evidence>
<evidence type="ECO:0000255" key="6">
    <source>
        <dbReference type="PROSITE-ProRule" id="PRU00548"/>
    </source>
</evidence>
<evidence type="ECO:0000269" key="7">
    <source>
    </source>
</evidence>
<evidence type="ECO:0000269" key="8">
    <source>
    </source>
</evidence>
<evidence type="ECO:0000269" key="9">
    <source>
    </source>
</evidence>
<evidence type="ECO:0000269" key="10">
    <source>
    </source>
</evidence>
<evidence type="ECO:0000269" key="11">
    <source>
    </source>
</evidence>
<evidence type="ECO:0000269" key="12">
    <source>
    </source>
</evidence>
<evidence type="ECO:0000269" key="13">
    <source>
    </source>
</evidence>
<evidence type="ECO:0000269" key="14">
    <source>
    </source>
</evidence>
<evidence type="ECO:0000269" key="15">
    <source>
    </source>
</evidence>
<evidence type="ECO:0000269" key="16">
    <source>
    </source>
</evidence>
<evidence type="ECO:0000269" key="17">
    <source>
    </source>
</evidence>
<evidence type="ECO:0000269" key="18">
    <source>
    </source>
</evidence>
<evidence type="ECO:0000269" key="19">
    <source>
    </source>
</evidence>
<evidence type="ECO:0000269" key="20">
    <source>
    </source>
</evidence>
<evidence type="ECO:0000269" key="21">
    <source>
    </source>
</evidence>
<evidence type="ECO:0000269" key="22">
    <source>
    </source>
</evidence>
<evidence type="ECO:0000269" key="23">
    <source>
    </source>
</evidence>
<evidence type="ECO:0000269" key="24">
    <source>
    </source>
</evidence>
<evidence type="ECO:0000269" key="25">
    <source>
    </source>
</evidence>
<evidence type="ECO:0000269" key="26">
    <source>
    </source>
</evidence>
<evidence type="ECO:0000269" key="27">
    <source>
    </source>
</evidence>
<evidence type="ECO:0000269" key="28">
    <source>
    </source>
</evidence>
<evidence type="ECO:0000305" key="29"/>
<evidence type="ECO:0000312" key="30">
    <source>
        <dbReference type="HGNC" id="HGNC:11312"/>
    </source>
</evidence>
<evidence type="ECO:0007744" key="31">
    <source>
    </source>
</evidence>
<evidence type="ECO:0007744" key="32">
    <source>
    </source>
</evidence>
<evidence type="ECO:0007744" key="33">
    <source>
    </source>
</evidence>
<evidence type="ECO:0007744" key="34">
    <source>
    </source>
</evidence>
<evidence type="ECO:0007829" key="35">
    <source>
        <dbReference type="PDB" id="5OLM"/>
    </source>
</evidence>
<evidence type="ECO:0007829" key="36">
    <source>
        <dbReference type="PDB" id="7BBD"/>
    </source>
</evidence>
<evidence type="ECO:0007829" key="37">
    <source>
        <dbReference type="PDB" id="8Y58"/>
    </source>
</evidence>
<dbReference type="EC" id="2.3.2.27" evidence="22 24 25 26"/>
<dbReference type="EMBL" id="M34551">
    <property type="protein sequence ID" value="AAA36581.1"/>
    <property type="molecule type" value="mRNA"/>
</dbReference>
<dbReference type="EMBL" id="U01882">
    <property type="protein sequence ID" value="AAB87094.1"/>
    <property type="molecule type" value="Genomic_DNA"/>
</dbReference>
<dbReference type="EMBL" id="M62800">
    <property type="protein sequence ID" value="AAA36651.1"/>
    <property type="molecule type" value="mRNA"/>
</dbReference>
<dbReference type="EMBL" id="U13658">
    <property type="protein sequence ID" value="AAA79867.1"/>
    <property type="molecule type" value="Genomic_DNA"/>
</dbReference>
<dbReference type="EMBL" id="U13657">
    <property type="protein sequence ID" value="AAA79867.1"/>
    <property type="status" value="JOINED"/>
    <property type="molecule type" value="Genomic_DNA"/>
</dbReference>
<dbReference type="EMBL" id="AF391283">
    <property type="protein sequence ID" value="AAK76432.1"/>
    <property type="molecule type" value="Genomic_DNA"/>
</dbReference>
<dbReference type="EMBL" id="AY742713">
    <property type="protein sequence ID" value="AAU89982.1"/>
    <property type="molecule type" value="mRNA"/>
</dbReference>
<dbReference type="EMBL" id="AC009758">
    <property type="status" value="NOT_ANNOTATED_CDS"/>
    <property type="molecule type" value="Genomic_DNA"/>
</dbReference>
<dbReference type="EMBL" id="BC010861">
    <property type="protein sequence ID" value="AAH10861.1"/>
    <property type="molecule type" value="mRNA"/>
</dbReference>
<dbReference type="CCDS" id="CCDS44525.1">
    <molecule id="P19474-1"/>
</dbReference>
<dbReference type="PIR" id="A55642">
    <property type="entry name" value="A37241"/>
</dbReference>
<dbReference type="RefSeq" id="NP_003132.2">
    <molecule id="P19474-1"/>
    <property type="nucleotide sequence ID" value="NM_003141.3"/>
</dbReference>
<dbReference type="PDB" id="2IWG">
    <property type="method" value="X-ray"/>
    <property type="resolution" value="2.35 A"/>
    <property type="chains" value="B/E=287-465"/>
</dbReference>
<dbReference type="PDB" id="5JPX">
    <property type="method" value="NMR"/>
    <property type="chains" value="A=86-130"/>
</dbReference>
<dbReference type="PDB" id="5OLM">
    <property type="method" value="X-ray"/>
    <property type="resolution" value="1.95 A"/>
    <property type="chains" value="A/B=1-129"/>
</dbReference>
<dbReference type="PDB" id="6FGA">
    <property type="method" value="X-ray"/>
    <property type="resolution" value="2.82 A"/>
    <property type="chains" value="A/B/C/D/E/F/G/H=1-98"/>
</dbReference>
<dbReference type="PDB" id="6S53">
    <property type="method" value="X-ray"/>
    <property type="resolution" value="2.80 A"/>
    <property type="chains" value="A/B/G/H=1-85"/>
</dbReference>
<dbReference type="PDB" id="7BBD">
    <property type="method" value="X-ray"/>
    <property type="resolution" value="2.20 A"/>
    <property type="chains" value="B=1-85"/>
</dbReference>
<dbReference type="PDB" id="8A58">
    <property type="method" value="X-ray"/>
    <property type="resolution" value="2.25 A"/>
    <property type="chains" value="C/D=1-85"/>
</dbReference>
<dbReference type="PDB" id="8Y58">
    <property type="method" value="X-ray"/>
    <property type="resolution" value="1.60 A"/>
    <property type="chains" value="A=287-475"/>
</dbReference>
<dbReference type="PDB" id="8Y59">
    <property type="method" value="X-ray"/>
    <property type="resolution" value="1.89 A"/>
    <property type="chains" value="A=287-475"/>
</dbReference>
<dbReference type="PDB" id="8Y5B">
    <property type="method" value="X-ray"/>
    <property type="resolution" value="1.74 A"/>
    <property type="chains" value="A=287-475"/>
</dbReference>
<dbReference type="PDB" id="9QBA">
    <property type="method" value="X-ray"/>
    <property type="resolution" value="1.45 A"/>
    <property type="chains" value="A=287-465"/>
</dbReference>
<dbReference type="PDBsum" id="2IWG"/>
<dbReference type="PDBsum" id="5JPX"/>
<dbReference type="PDBsum" id="5OLM"/>
<dbReference type="PDBsum" id="6FGA"/>
<dbReference type="PDBsum" id="6S53"/>
<dbReference type="PDBsum" id="7BBD"/>
<dbReference type="PDBsum" id="8A58"/>
<dbReference type="PDBsum" id="8Y58"/>
<dbReference type="PDBsum" id="8Y59"/>
<dbReference type="PDBsum" id="8Y5B"/>
<dbReference type="PDBsum" id="9QBA"/>
<dbReference type="SMR" id="P19474"/>
<dbReference type="BioGRID" id="112615">
    <property type="interactions" value="694"/>
</dbReference>
<dbReference type="CORUM" id="P19474"/>
<dbReference type="FunCoup" id="P19474">
    <property type="interactions" value="1606"/>
</dbReference>
<dbReference type="IntAct" id="P19474">
    <property type="interactions" value="89"/>
</dbReference>
<dbReference type="MINT" id="P19474"/>
<dbReference type="STRING" id="9606.ENSP00000254436"/>
<dbReference type="GlyGen" id="P19474">
    <property type="glycosylation" value="1 site, 1 O-linked glycan (1 site)"/>
</dbReference>
<dbReference type="iPTMnet" id="P19474"/>
<dbReference type="PhosphoSitePlus" id="P19474"/>
<dbReference type="BioMuta" id="TRIM21"/>
<dbReference type="DMDM" id="133250"/>
<dbReference type="jPOST" id="P19474"/>
<dbReference type="MassIVE" id="P19474"/>
<dbReference type="PaxDb" id="9606-ENSP00000254436"/>
<dbReference type="PeptideAtlas" id="P19474"/>
<dbReference type="ProteomicsDB" id="53666">
    <molecule id="P19474-1"/>
</dbReference>
<dbReference type="ProteomicsDB" id="53667">
    <molecule id="P19474-2"/>
</dbReference>
<dbReference type="Pumba" id="P19474"/>
<dbReference type="Antibodypedia" id="1469">
    <property type="antibodies" value="408 antibodies from 42 providers"/>
</dbReference>
<dbReference type="DNASU" id="6737"/>
<dbReference type="Ensembl" id="ENST00000254436.8">
    <molecule id="P19474-1"/>
    <property type="protein sequence ID" value="ENSP00000254436.7"/>
    <property type="gene ID" value="ENSG00000132109.10"/>
</dbReference>
<dbReference type="GeneID" id="6737"/>
<dbReference type="KEGG" id="hsa:6737"/>
<dbReference type="MANE-Select" id="ENST00000254436.8">
    <property type="protein sequence ID" value="ENSP00000254436.7"/>
    <property type="RefSeq nucleotide sequence ID" value="NM_003141.4"/>
    <property type="RefSeq protein sequence ID" value="NP_003132.2"/>
</dbReference>
<dbReference type="UCSC" id="uc001lyy.2">
    <molecule id="P19474-1"/>
    <property type="organism name" value="human"/>
</dbReference>
<dbReference type="AGR" id="HGNC:11312"/>
<dbReference type="CTD" id="6737"/>
<dbReference type="DisGeNET" id="6737"/>
<dbReference type="GeneCards" id="TRIM21"/>
<dbReference type="HGNC" id="HGNC:11312">
    <property type="gene designation" value="TRIM21"/>
</dbReference>
<dbReference type="HPA" id="ENSG00000132109">
    <property type="expression patterns" value="Low tissue specificity"/>
</dbReference>
<dbReference type="MIM" id="109092">
    <property type="type" value="gene"/>
</dbReference>
<dbReference type="neXtProt" id="NX_P19474"/>
<dbReference type="OpenTargets" id="ENSG00000132109"/>
<dbReference type="PharmGKB" id="PA36136"/>
<dbReference type="VEuPathDB" id="HostDB:ENSG00000132109"/>
<dbReference type="eggNOG" id="KOG2177">
    <property type="taxonomic scope" value="Eukaryota"/>
</dbReference>
<dbReference type="GeneTree" id="ENSGT00940000161515"/>
<dbReference type="HOGENOM" id="CLU_013137_0_3_1"/>
<dbReference type="InParanoid" id="P19474"/>
<dbReference type="OMA" id="CRNSVQR"/>
<dbReference type="OrthoDB" id="128536at2759"/>
<dbReference type="PAN-GO" id="P19474">
    <property type="GO annotations" value="13 GO annotations based on evolutionary models"/>
</dbReference>
<dbReference type="PhylomeDB" id="P19474"/>
<dbReference type="TreeFam" id="TF338674"/>
<dbReference type="PathwayCommons" id="P19474"/>
<dbReference type="Reactome" id="R-HSA-1834941">
    <property type="pathway name" value="STING mediated induction of host immune responses"/>
</dbReference>
<dbReference type="Reactome" id="R-HSA-3134975">
    <property type="pathway name" value="Regulation of innate immune responses to cytosolic DNA"/>
</dbReference>
<dbReference type="Reactome" id="R-HSA-877300">
    <property type="pathway name" value="Interferon gamma signaling"/>
</dbReference>
<dbReference type="Reactome" id="R-HSA-9755511">
    <property type="pathway name" value="KEAP1-NFE2L2 pathway"/>
</dbReference>
<dbReference type="Reactome" id="R-HSA-983168">
    <property type="pathway name" value="Antigen processing: Ubiquitination &amp; Proteasome degradation"/>
</dbReference>
<dbReference type="SignaLink" id="P19474"/>
<dbReference type="SIGNOR" id="P19474"/>
<dbReference type="UniPathway" id="UPA00143"/>
<dbReference type="BioGRID-ORCS" id="6737">
    <property type="hits" value="16 hits in 1205 CRISPR screens"/>
</dbReference>
<dbReference type="CD-CODE" id="232F8A39">
    <property type="entry name" value="P-body"/>
</dbReference>
<dbReference type="CD-CODE" id="DEE660B4">
    <property type="entry name" value="Stress granule"/>
</dbReference>
<dbReference type="EvolutionaryTrace" id="P19474"/>
<dbReference type="GeneWiki" id="TRIM21"/>
<dbReference type="GenomeRNAi" id="6737"/>
<dbReference type="Pharos" id="P19474">
    <property type="development level" value="Tbio"/>
</dbReference>
<dbReference type="PRO" id="PR:P19474"/>
<dbReference type="Proteomes" id="UP000005640">
    <property type="component" value="Chromosome 11"/>
</dbReference>
<dbReference type="RNAct" id="P19474">
    <property type="molecule type" value="protein"/>
</dbReference>
<dbReference type="Bgee" id="ENSG00000132109">
    <property type="expression patterns" value="Expressed in granulocyte and 120 other cell types or tissues"/>
</dbReference>
<dbReference type="ExpressionAtlas" id="P19474">
    <property type="expression patterns" value="baseline and differential"/>
</dbReference>
<dbReference type="GO" id="GO:0005776">
    <property type="term" value="C:autophagosome"/>
    <property type="evidence" value="ECO:0007669"/>
    <property type="project" value="UniProtKB-SubCell"/>
</dbReference>
<dbReference type="GO" id="GO:0005737">
    <property type="term" value="C:cytoplasm"/>
    <property type="evidence" value="ECO:0000314"/>
    <property type="project" value="UniProtKB"/>
</dbReference>
<dbReference type="GO" id="GO:0010494">
    <property type="term" value="C:cytoplasmic stress granule"/>
    <property type="evidence" value="ECO:0000314"/>
    <property type="project" value="UniProtKB"/>
</dbReference>
<dbReference type="GO" id="GO:0031410">
    <property type="term" value="C:cytoplasmic vesicle"/>
    <property type="evidence" value="ECO:0007669"/>
    <property type="project" value="UniProtKB-KW"/>
</dbReference>
<dbReference type="GO" id="GO:0005829">
    <property type="term" value="C:cytosol"/>
    <property type="evidence" value="ECO:0000304"/>
    <property type="project" value="Reactome"/>
</dbReference>
<dbReference type="GO" id="GO:0005654">
    <property type="term" value="C:nucleoplasm"/>
    <property type="evidence" value="ECO:0000314"/>
    <property type="project" value="HPA"/>
</dbReference>
<dbReference type="GO" id="GO:0005634">
    <property type="term" value="C:nucleus"/>
    <property type="evidence" value="ECO:0000314"/>
    <property type="project" value="UniProtKB"/>
</dbReference>
<dbReference type="GO" id="GO:0000932">
    <property type="term" value="C:P-body"/>
    <property type="evidence" value="ECO:0007669"/>
    <property type="project" value="UniProtKB-SubCell"/>
</dbReference>
<dbReference type="GO" id="GO:1990904">
    <property type="term" value="C:ribonucleoprotein complex"/>
    <property type="evidence" value="ECO:0000304"/>
    <property type="project" value="ProtInc"/>
</dbReference>
<dbReference type="GO" id="GO:0003677">
    <property type="term" value="F:DNA binding"/>
    <property type="evidence" value="ECO:0007669"/>
    <property type="project" value="UniProtKB-KW"/>
</dbReference>
<dbReference type="GO" id="GO:0042802">
    <property type="term" value="F:identical protein binding"/>
    <property type="evidence" value="ECO:0000353"/>
    <property type="project" value="UniProtKB"/>
</dbReference>
<dbReference type="GO" id="GO:0003723">
    <property type="term" value="F:RNA binding"/>
    <property type="evidence" value="ECO:0007669"/>
    <property type="project" value="UniProtKB-KW"/>
</dbReference>
<dbReference type="GO" id="GO:0003713">
    <property type="term" value="F:transcription coactivator activity"/>
    <property type="evidence" value="ECO:0000314"/>
    <property type="project" value="ARUK-UCL"/>
</dbReference>
<dbReference type="GO" id="GO:0061630">
    <property type="term" value="F:ubiquitin protein ligase activity"/>
    <property type="evidence" value="ECO:0000314"/>
    <property type="project" value="UniProtKB"/>
</dbReference>
<dbReference type="GO" id="GO:0004842">
    <property type="term" value="F:ubiquitin-protein transferase activity"/>
    <property type="evidence" value="ECO:0000314"/>
    <property type="project" value="UniProtKB"/>
</dbReference>
<dbReference type="GO" id="GO:0008270">
    <property type="term" value="F:zinc ion binding"/>
    <property type="evidence" value="ECO:0007669"/>
    <property type="project" value="UniProtKB-KW"/>
</dbReference>
<dbReference type="GO" id="GO:0140374">
    <property type="term" value="P:antiviral innate immune response"/>
    <property type="evidence" value="ECO:0000314"/>
    <property type="project" value="UniProt"/>
</dbReference>
<dbReference type="GO" id="GO:0062197">
    <property type="term" value="P:cellular response to chemical stress"/>
    <property type="evidence" value="ECO:0000304"/>
    <property type="project" value="Reactome"/>
</dbReference>
<dbReference type="GO" id="GO:0045087">
    <property type="term" value="P:innate immune response"/>
    <property type="evidence" value="ECO:0000314"/>
    <property type="project" value="UniProtKB"/>
</dbReference>
<dbReference type="GO" id="GO:0045824">
    <property type="term" value="P:negative regulation of innate immune response"/>
    <property type="evidence" value="ECO:0000314"/>
    <property type="project" value="UniProtKB"/>
</dbReference>
<dbReference type="GO" id="GO:0032088">
    <property type="term" value="P:negative regulation of NF-kappaB transcription factor activity"/>
    <property type="evidence" value="ECO:0000314"/>
    <property type="project" value="UniProtKB"/>
</dbReference>
<dbReference type="GO" id="GO:0090086">
    <property type="term" value="P:negative regulation of protein deubiquitination"/>
    <property type="evidence" value="ECO:0000315"/>
    <property type="project" value="UniProtKB"/>
</dbReference>
<dbReference type="GO" id="GO:0032897">
    <property type="term" value="P:negative regulation of viral transcription"/>
    <property type="evidence" value="ECO:0000314"/>
    <property type="project" value="UniProtKB"/>
</dbReference>
<dbReference type="GO" id="GO:0010508">
    <property type="term" value="P:positive regulation of autophagy"/>
    <property type="evidence" value="ECO:0000315"/>
    <property type="project" value="UniProtKB"/>
</dbReference>
<dbReference type="GO" id="GO:0045787">
    <property type="term" value="P:positive regulation of cell cycle"/>
    <property type="evidence" value="ECO:0000315"/>
    <property type="project" value="UniProtKB"/>
</dbReference>
<dbReference type="GO" id="GO:0051091">
    <property type="term" value="P:positive regulation of DNA-binding transcription factor activity"/>
    <property type="evidence" value="ECO:0000314"/>
    <property type="project" value="UniProtKB"/>
</dbReference>
<dbReference type="GO" id="GO:0032092">
    <property type="term" value="P:positive regulation of protein binding"/>
    <property type="evidence" value="ECO:0000315"/>
    <property type="project" value="UniProtKB"/>
</dbReference>
<dbReference type="GO" id="GO:0046598">
    <property type="term" value="P:positive regulation of viral entry into host cell"/>
    <property type="evidence" value="ECO:0007669"/>
    <property type="project" value="Ensembl"/>
</dbReference>
<dbReference type="GO" id="GO:0010498">
    <property type="term" value="P:proteasomal protein catabolic process"/>
    <property type="evidence" value="ECO:0000314"/>
    <property type="project" value="UniProt"/>
</dbReference>
<dbReference type="GO" id="GO:0051865">
    <property type="term" value="P:protein autoubiquitination"/>
    <property type="evidence" value="ECO:0000314"/>
    <property type="project" value="UniProtKB"/>
</dbReference>
<dbReference type="GO" id="GO:0031648">
    <property type="term" value="P:protein destabilization"/>
    <property type="evidence" value="ECO:0000315"/>
    <property type="project" value="UniProtKB"/>
</dbReference>
<dbReference type="GO" id="GO:0044314">
    <property type="term" value="P:protein K27-linked ubiquitination"/>
    <property type="evidence" value="ECO:0000314"/>
    <property type="project" value="UniProt"/>
</dbReference>
<dbReference type="GO" id="GO:0070936">
    <property type="term" value="P:protein K48-linked ubiquitination"/>
    <property type="evidence" value="ECO:0000314"/>
    <property type="project" value="UniProt"/>
</dbReference>
<dbReference type="GO" id="GO:0085020">
    <property type="term" value="P:protein K6-linked ubiquitination"/>
    <property type="evidence" value="ECO:0000314"/>
    <property type="project" value="UniProt"/>
</dbReference>
<dbReference type="GO" id="GO:0070534">
    <property type="term" value="P:protein K63-linked ubiquitination"/>
    <property type="evidence" value="ECO:0000314"/>
    <property type="project" value="UniProt"/>
</dbReference>
<dbReference type="GO" id="GO:0006513">
    <property type="term" value="P:protein monoubiquitination"/>
    <property type="evidence" value="ECO:0000314"/>
    <property type="project" value="UniProtKB"/>
</dbReference>
<dbReference type="GO" id="GO:0000209">
    <property type="term" value="P:protein polyubiquitination"/>
    <property type="evidence" value="ECO:0000314"/>
    <property type="project" value="UniProtKB"/>
</dbReference>
<dbReference type="GO" id="GO:0016567">
    <property type="term" value="P:protein ubiquitination"/>
    <property type="evidence" value="ECO:0000314"/>
    <property type="project" value="UniProtKB"/>
</dbReference>
<dbReference type="GO" id="GO:0070269">
    <property type="term" value="P:pyroptotic inflammatory response"/>
    <property type="evidence" value="ECO:0000314"/>
    <property type="project" value="UniProt"/>
</dbReference>
<dbReference type="GO" id="GO:0010468">
    <property type="term" value="P:regulation of gene expression"/>
    <property type="evidence" value="ECO:0000318"/>
    <property type="project" value="GO_Central"/>
</dbReference>
<dbReference type="GO" id="GO:0032479">
    <property type="term" value="P:regulation of type I interferon production"/>
    <property type="evidence" value="ECO:0000304"/>
    <property type="project" value="Reactome"/>
</dbReference>
<dbReference type="GO" id="GO:0034341">
    <property type="term" value="P:response to type II interferon"/>
    <property type="evidence" value="ECO:0000314"/>
    <property type="project" value="UniProtKB"/>
</dbReference>
<dbReference type="GO" id="GO:0035617">
    <property type="term" value="P:stress granule disassembly"/>
    <property type="evidence" value="ECO:0000314"/>
    <property type="project" value="UniProtKB"/>
</dbReference>
<dbReference type="GO" id="GO:0044790">
    <property type="term" value="P:suppression of viral release by host"/>
    <property type="evidence" value="ECO:0000314"/>
    <property type="project" value="UniProtKB"/>
</dbReference>
<dbReference type="CDD" id="cd19772">
    <property type="entry name" value="Bbox2_TRIM21_C-IV"/>
    <property type="match status" value="1"/>
</dbReference>
<dbReference type="CDD" id="cd16596">
    <property type="entry name" value="RING-HC_TRIM21_C-IV"/>
    <property type="match status" value="1"/>
</dbReference>
<dbReference type="CDD" id="cd12900">
    <property type="entry name" value="SPRY_PRY_TRIM21"/>
    <property type="match status" value="1"/>
</dbReference>
<dbReference type="FunFam" id="2.60.120.920:FF:000004">
    <property type="entry name" value="Butyrophilin subfamily 1 member A1"/>
    <property type="match status" value="1"/>
</dbReference>
<dbReference type="FunFam" id="3.30.160.60:FF:000386">
    <property type="entry name" value="Tripartite motif-containing 5 (Predicted)"/>
    <property type="match status" value="1"/>
</dbReference>
<dbReference type="FunFam" id="3.30.40.10:FF:000144">
    <property type="entry name" value="Tripartite motif-containing 5 (Predicted)"/>
    <property type="match status" value="1"/>
</dbReference>
<dbReference type="Gene3D" id="2.60.120.920">
    <property type="match status" value="1"/>
</dbReference>
<dbReference type="Gene3D" id="3.30.160.60">
    <property type="entry name" value="Classic Zinc Finger"/>
    <property type="match status" value="1"/>
</dbReference>
<dbReference type="Gene3D" id="3.30.40.10">
    <property type="entry name" value="Zinc/RING finger domain, C3HC4 (zinc finger)"/>
    <property type="match status" value="1"/>
</dbReference>
<dbReference type="InterPro" id="IPR001870">
    <property type="entry name" value="B30.2/SPRY"/>
</dbReference>
<dbReference type="InterPro" id="IPR043136">
    <property type="entry name" value="B30.2/SPRY_sf"/>
</dbReference>
<dbReference type="InterPro" id="IPR003879">
    <property type="entry name" value="Butyrophylin_SPRY"/>
</dbReference>
<dbReference type="InterPro" id="IPR013320">
    <property type="entry name" value="ConA-like_dom_sf"/>
</dbReference>
<dbReference type="InterPro" id="IPR006574">
    <property type="entry name" value="PRY"/>
</dbReference>
<dbReference type="InterPro" id="IPR035831">
    <property type="entry name" value="PRY/SPRY_TRIM21"/>
</dbReference>
<dbReference type="InterPro" id="IPR003877">
    <property type="entry name" value="SPRY_dom"/>
</dbReference>
<dbReference type="InterPro" id="IPR050143">
    <property type="entry name" value="TRIM/RBCC"/>
</dbReference>
<dbReference type="InterPro" id="IPR003613">
    <property type="entry name" value="Ubox_domain"/>
</dbReference>
<dbReference type="InterPro" id="IPR000315">
    <property type="entry name" value="Znf_B-box"/>
</dbReference>
<dbReference type="InterPro" id="IPR020457">
    <property type="entry name" value="Znf_B-box_chordata"/>
</dbReference>
<dbReference type="InterPro" id="IPR018957">
    <property type="entry name" value="Znf_C3HC4_RING-type"/>
</dbReference>
<dbReference type="InterPro" id="IPR001841">
    <property type="entry name" value="Znf_RING"/>
</dbReference>
<dbReference type="InterPro" id="IPR013083">
    <property type="entry name" value="Znf_RING/FYVE/PHD"/>
</dbReference>
<dbReference type="InterPro" id="IPR017907">
    <property type="entry name" value="Znf_RING_CS"/>
</dbReference>
<dbReference type="PANTHER" id="PTHR24103">
    <property type="entry name" value="E3 UBIQUITIN-PROTEIN LIGASE TRIM"/>
    <property type="match status" value="1"/>
</dbReference>
<dbReference type="Pfam" id="PF13765">
    <property type="entry name" value="PRY"/>
    <property type="match status" value="1"/>
</dbReference>
<dbReference type="Pfam" id="PF00622">
    <property type="entry name" value="SPRY"/>
    <property type="match status" value="1"/>
</dbReference>
<dbReference type="Pfam" id="PF00643">
    <property type="entry name" value="zf-B_box"/>
    <property type="match status" value="1"/>
</dbReference>
<dbReference type="Pfam" id="PF00097">
    <property type="entry name" value="zf-C3HC4"/>
    <property type="match status" value="1"/>
</dbReference>
<dbReference type="PRINTS" id="PR01406">
    <property type="entry name" value="BBOXZNFINGER"/>
</dbReference>
<dbReference type="PRINTS" id="PR01407">
    <property type="entry name" value="BUTYPHLNCDUF"/>
</dbReference>
<dbReference type="SMART" id="SM00336">
    <property type="entry name" value="BBOX"/>
    <property type="match status" value="1"/>
</dbReference>
<dbReference type="SMART" id="SM00589">
    <property type="entry name" value="PRY"/>
    <property type="match status" value="1"/>
</dbReference>
<dbReference type="SMART" id="SM00184">
    <property type="entry name" value="RING"/>
    <property type="match status" value="1"/>
</dbReference>
<dbReference type="SMART" id="SM00449">
    <property type="entry name" value="SPRY"/>
    <property type="match status" value="1"/>
</dbReference>
<dbReference type="SMART" id="SM00504">
    <property type="entry name" value="Ubox"/>
    <property type="match status" value="1"/>
</dbReference>
<dbReference type="SUPFAM" id="SSF57845">
    <property type="entry name" value="B-box zinc-binding domain"/>
    <property type="match status" value="1"/>
</dbReference>
<dbReference type="SUPFAM" id="SSF49899">
    <property type="entry name" value="Concanavalin A-like lectins/glucanases"/>
    <property type="match status" value="1"/>
</dbReference>
<dbReference type="SUPFAM" id="SSF57850">
    <property type="entry name" value="RING/U-box"/>
    <property type="match status" value="1"/>
</dbReference>
<dbReference type="PROSITE" id="PS50188">
    <property type="entry name" value="B302_SPRY"/>
    <property type="match status" value="1"/>
</dbReference>
<dbReference type="PROSITE" id="PS50119">
    <property type="entry name" value="ZF_BBOX"/>
    <property type="match status" value="1"/>
</dbReference>
<dbReference type="PROSITE" id="PS00518">
    <property type="entry name" value="ZF_RING_1"/>
    <property type="match status" value="1"/>
</dbReference>
<dbReference type="PROSITE" id="PS50089">
    <property type="entry name" value="ZF_RING_2"/>
    <property type="match status" value="1"/>
</dbReference>
<feature type="chain" id="PRO_0000056115" description="E3 ubiquitin-protein ligase TRIM21">
    <location>
        <begin position="1"/>
        <end position="475"/>
    </location>
</feature>
<feature type="domain" description="B30.2/SPRY" evidence="6">
    <location>
        <begin position="268"/>
        <end position="465"/>
    </location>
</feature>
<feature type="zinc finger region" description="RING-type" evidence="5">
    <location>
        <begin position="16"/>
        <end position="55"/>
    </location>
</feature>
<feature type="zinc finger region" description="B box-type" evidence="4">
    <location>
        <begin position="92"/>
        <end position="123"/>
    </location>
</feature>
<feature type="coiled-coil region" evidence="3">
    <location>
        <begin position="128"/>
        <end position="238"/>
    </location>
</feature>
<feature type="binding site" evidence="4">
    <location>
        <position position="92"/>
    </location>
    <ligand>
        <name>Zn(2+)</name>
        <dbReference type="ChEBI" id="CHEBI:29105"/>
    </ligand>
</feature>
<feature type="binding site" evidence="4">
    <location>
        <position position="95"/>
    </location>
    <ligand>
        <name>Zn(2+)</name>
        <dbReference type="ChEBI" id="CHEBI:29105"/>
    </ligand>
</feature>
<feature type="binding site" evidence="4">
    <location>
        <position position="114"/>
    </location>
    <ligand>
        <name>Zn(2+)</name>
        <dbReference type="ChEBI" id="CHEBI:29105"/>
    </ligand>
</feature>
<feature type="binding site" evidence="4">
    <location>
        <position position="120"/>
    </location>
    <ligand>
        <name>Zn(2+)</name>
        <dbReference type="ChEBI" id="CHEBI:29105"/>
    </ligand>
</feature>
<feature type="modified residue" description="Phosphoserine" evidence="31 32 33 34">
    <location>
        <position position="266"/>
    </location>
</feature>
<feature type="splice variant" id="VSP_039627" description="In isoform 2." evidence="29">
    <location>
        <begin position="169"/>
        <end position="245"/>
    </location>
</feature>
<feature type="sequence variant" id="VAR_013749" description="In dbSNP:rs1042302." evidence="19">
    <original>P</original>
    <variation>A</variation>
    <location>
        <position position="52"/>
    </location>
</feature>
<feature type="sequence variant" id="VAR_061821" description="In dbSNP:rs58403334.">
    <original>Q</original>
    <variation>K</variation>
    <location>
        <position position="88"/>
    </location>
</feature>
<feature type="sequence variant" id="VAR_013750" description="In dbSNP:rs2975162." evidence="28">
    <original>G</original>
    <variation>R</variation>
    <location>
        <position position="96"/>
    </location>
</feature>
<feature type="sequence variant" id="VAR_013751" description="In dbSNP:rs2554934.">
    <original>E</original>
    <variation>K</variation>
    <location>
        <position position="231"/>
    </location>
</feature>
<feature type="mutagenesis site" description="Loss of E3 ubiquitin-protein ligase activity. Does not inhibit NF-kappa-B-induced gene expression. Loss of E3 ubiquitin-protein ligase activity; when associated with 31-A--A-33." evidence="8 10 17 25 26">
    <original>C</original>
    <variation>A</variation>
    <location>
        <position position="16"/>
    </location>
</feature>
<feature type="mutagenesis site" description="Loss of E3 ubiquitin-protein ligase activity; when associated with A-16." evidence="26">
    <original>CGH</original>
    <variation>AGA</variation>
    <location>
        <begin position="31"/>
        <end position="33"/>
    </location>
</feature>
<feature type="sequence conflict" description="In Ref. 6; AAU89982." evidence="29" ref="6">
    <original>M</original>
    <variation>T</variation>
    <location>
        <position position="10"/>
    </location>
</feature>
<feature type="sequence conflict" description="In Ref. 6; AAU89982." evidence="29" ref="6">
    <original>L</original>
    <variation>P</variation>
    <location>
        <position position="189"/>
    </location>
</feature>
<feature type="sequence conflict" description="In Ref. 6; AAU89982." evidence="29" ref="6">
    <original>A</original>
    <variation>T</variation>
    <location>
        <position position="216"/>
    </location>
</feature>
<feature type="sequence conflict" description="In Ref. 6; AAU89982." evidence="29" ref="6">
    <original>L</original>
    <variation>V</variation>
    <location>
        <position position="262"/>
    </location>
</feature>
<feature type="sequence conflict" description="In Ref. 6; AAU89982." evidence="29" ref="6">
    <original>D</original>
    <variation>V</variation>
    <location>
        <position position="313"/>
    </location>
</feature>
<feature type="turn" evidence="36">
    <location>
        <begin position="1"/>
        <end position="3"/>
    </location>
</feature>
<feature type="helix" evidence="35">
    <location>
        <begin position="4"/>
        <end position="13"/>
    </location>
</feature>
<feature type="turn" evidence="35">
    <location>
        <begin position="17"/>
        <end position="19"/>
    </location>
</feature>
<feature type="strand" evidence="35">
    <location>
        <begin position="20"/>
        <end position="22"/>
    </location>
</feature>
<feature type="strand" evidence="35">
    <location>
        <begin position="24"/>
        <end position="28"/>
    </location>
</feature>
<feature type="strand" evidence="35">
    <location>
        <begin position="34"/>
        <end position="36"/>
    </location>
</feature>
<feature type="helix" evidence="35">
    <location>
        <begin position="37"/>
        <end position="44"/>
    </location>
</feature>
<feature type="strand" evidence="36">
    <location>
        <begin position="48"/>
        <end position="50"/>
    </location>
</feature>
<feature type="turn" evidence="35">
    <location>
        <begin position="52"/>
        <end position="54"/>
    </location>
</feature>
<feature type="strand" evidence="36">
    <location>
        <begin position="57"/>
        <end position="59"/>
    </location>
</feature>
<feature type="helix" evidence="35">
    <location>
        <begin position="60"/>
        <end position="62"/>
    </location>
</feature>
<feature type="helix" evidence="35">
    <location>
        <begin position="67"/>
        <end position="82"/>
    </location>
</feature>
<feature type="turn" evidence="35">
    <location>
        <begin position="93"/>
        <end position="95"/>
    </location>
</feature>
<feature type="strand" evidence="35">
    <location>
        <begin position="101"/>
        <end position="103"/>
    </location>
</feature>
<feature type="turn" evidence="35">
    <location>
        <begin position="104"/>
        <end position="106"/>
    </location>
</feature>
<feature type="helix" evidence="35">
    <location>
        <begin position="112"/>
        <end position="116"/>
    </location>
</feature>
<feature type="turn" evidence="35">
    <location>
        <begin position="118"/>
        <end position="122"/>
    </location>
</feature>
<feature type="strand" evidence="35">
    <location>
        <begin position="125"/>
        <end position="127"/>
    </location>
</feature>
<feature type="helix" evidence="37">
    <location>
        <begin position="293"/>
        <end position="295"/>
    </location>
</feature>
<feature type="strand" evidence="37">
    <location>
        <begin position="300"/>
        <end position="302"/>
    </location>
</feature>
<feature type="strand" evidence="37">
    <location>
        <begin position="306"/>
        <end position="311"/>
    </location>
</feature>
<feature type="strand" evidence="37">
    <location>
        <begin position="327"/>
        <end position="329"/>
    </location>
</feature>
<feature type="strand" evidence="37">
    <location>
        <begin position="331"/>
        <end position="334"/>
    </location>
</feature>
<feature type="strand" evidence="37">
    <location>
        <begin position="337"/>
        <end position="347"/>
    </location>
</feature>
<feature type="strand" evidence="37">
    <location>
        <begin position="354"/>
        <end position="360"/>
    </location>
</feature>
<feature type="turn" evidence="37">
    <location>
        <begin position="373"/>
        <end position="376"/>
    </location>
</feature>
<feature type="strand" evidence="37">
    <location>
        <begin position="377"/>
        <end position="383"/>
    </location>
</feature>
<feature type="turn" evidence="37">
    <location>
        <begin position="384"/>
        <end position="386"/>
    </location>
</feature>
<feature type="strand" evidence="37">
    <location>
        <begin position="387"/>
        <end position="390"/>
    </location>
</feature>
<feature type="strand" evidence="37">
    <location>
        <begin position="396"/>
        <end position="398"/>
    </location>
</feature>
<feature type="strand" evidence="37">
    <location>
        <begin position="405"/>
        <end position="412"/>
    </location>
</feature>
<feature type="turn" evidence="37">
    <location>
        <begin position="413"/>
        <end position="416"/>
    </location>
</feature>
<feature type="strand" evidence="37">
    <location>
        <begin position="417"/>
        <end position="422"/>
    </location>
</feature>
<feature type="turn" evidence="37">
    <location>
        <begin position="423"/>
        <end position="427"/>
    </location>
</feature>
<feature type="strand" evidence="37">
    <location>
        <begin position="428"/>
        <end position="433"/>
    </location>
</feature>
<feature type="strand" evidence="37">
    <location>
        <begin position="442"/>
        <end position="447"/>
    </location>
</feature>
<feature type="strand" evidence="37">
    <location>
        <begin position="452"/>
        <end position="454"/>
    </location>
</feature>
<feature type="strand" evidence="37">
    <location>
        <begin position="460"/>
        <end position="462"/>
    </location>
</feature>
<sequence length="475" mass="54170">MASAARLTMMWEEVTCPICLDPFVEPVSIECGHSFCQECISQVGKGGGSVCPVCRQRFLLKNLRPNRQLANMVNNLKEISQEAREGTQGERCAVHGERLHLFCEKDGKALCWVCAQSRKHRDHAMVPLEEAAQEYQEKLQVALGELRRKQELAEKLEVEIAIKRADWKKTVETQKSRIHAEFVQQKNFLVEEEQRQLQELEKDEREQLRILGEKEAKLAQQSQALQELISELDRRCHSSALELLQEVIIVLERSESWNLKDLDITSPELRSVCHVPGLKKMLRTCAVHITLDPDTANPWLILSEDRRQVRLGDTQQSIPGNEERFDSYPMVLGAQHFHSGKHYWEVDVTGKEAWDLGVCRDSVRRKGHFLLSSKSGFWTIWLWNKQKYEAGTYPQTPLHLQVPPCQVGIFLDYEAGMVSFYNITDHGSLIYSFSECAFTGPLRPFFSPGFNDGGKNTAPLTLCPLNIGSQGSTDY</sequence>
<keyword id="KW-0002">3D-structure</keyword>
<keyword id="KW-0025">Alternative splicing</keyword>
<keyword id="KW-0131">Cell cycle</keyword>
<keyword id="KW-0175">Coiled coil</keyword>
<keyword id="KW-0963">Cytoplasm</keyword>
<keyword id="KW-0968">Cytoplasmic vesicle</keyword>
<keyword id="KW-0238">DNA-binding</keyword>
<keyword id="KW-0945">Host-virus interaction</keyword>
<keyword id="KW-0479">Metal-binding</keyword>
<keyword id="KW-0539">Nucleus</keyword>
<keyword id="KW-0597">Phosphoprotein</keyword>
<keyword id="KW-1267">Proteomics identification</keyword>
<keyword id="KW-1185">Reference proteome</keyword>
<keyword id="KW-0687">Ribonucleoprotein</keyword>
<keyword id="KW-0694">RNA-binding</keyword>
<keyword id="KW-0808">Transferase</keyword>
<keyword id="KW-0832">Ubl conjugation</keyword>
<keyword id="KW-0833">Ubl conjugation pathway</keyword>
<keyword id="KW-0862">Zinc</keyword>
<keyword id="KW-0863">Zinc-finger</keyword>
<proteinExistence type="evidence at protein level"/>
<accession>P19474</accession>
<accession>Q5XPV5</accession>
<accession>Q96RF8</accession>
<protein>
    <recommendedName>
        <fullName>E3 ubiquitin-protein ligase TRIM21</fullName>
        <ecNumber evidence="22 24 25 26">2.3.2.27</ecNumber>
    </recommendedName>
    <alternativeName>
        <fullName>52 kDa Ro protein</fullName>
    </alternativeName>
    <alternativeName>
        <fullName>52 kDa ribonucleoprotein autoantigen Ro/SS-A</fullName>
    </alternativeName>
    <alternativeName>
        <fullName>RING finger protein 81</fullName>
    </alternativeName>
    <alternativeName>
        <fullName>Ro(SS-A)</fullName>
    </alternativeName>
    <alternativeName>
        <fullName>Sjoegren syndrome type A antigen</fullName>
        <shortName>SS-A</shortName>
    </alternativeName>
    <alternativeName>
        <fullName>Tripartite motif-containing protein 21</fullName>
    </alternativeName>
</protein>
<gene>
    <name evidence="30" type="primary">TRIM21</name>
    <name type="synonym">RNF81</name>
    <name type="synonym">RO52</name>
    <name type="synonym">SSA1</name>
</gene>
<reference key="1">
    <citation type="journal article" date="1991" name="J. Clin. Invest.">
        <title>Protein heterogeneity in the human Ro/SSA ribonucleoproteins. The 52- and 60-kD Ro/SSA autoantigens are encoded by separate genes.</title>
        <authorList>
            <person name="Itoh K."/>
            <person name="Itoh Y."/>
            <person name="Frank M.B."/>
        </authorList>
    </citation>
    <scope>NUCLEOTIDE SEQUENCE [MRNA] (ISOFORM 1)</scope>
    <scope>FUNCTION</scope>
    <source>
        <tissue>Thymocyte</tissue>
    </source>
</reference>
<reference key="2">
    <citation type="journal article" date="1991" name="J. Clin. Invest.">
        <title>Molecular definition and sequence motifs of the 52-kD component of human SS-A/Ro autoantigen.</title>
        <authorList>
            <person name="Chan E.K."/>
            <person name="Hamel J.C."/>
            <person name="Buyon J.P."/>
            <person name="Tan E.M."/>
        </authorList>
    </citation>
    <scope>NUCLEOTIDE SEQUENCE [GENOMIC DNA / MRNA] (ISOFORM 1)</scope>
    <scope>VARIANT ALA-52</scope>
</reference>
<reference key="3">
    <citation type="journal article" date="1994" name="Genomics">
        <title>The location of a disease-associated polymorphism and genomic structure of the human 52-kDa Ro/SSA locus (SSA1).</title>
        <authorList>
            <person name="Tsugu H."/>
            <person name="Horowitz R."/>
            <person name="Gibson N."/>
            <person name="Frank M.B."/>
        </authorList>
    </citation>
    <scope>NUCLEOTIDE SEQUENCE [GENOMIC DNA] (ISOFORM 1)</scope>
</reference>
<reference key="4">
    <citation type="journal article" date="1996" name="Clin. Exp. Immunol.">
        <title>Structural differences between the human and mouse 52-kD Ro autoantigens associated with poorly conserved autoantibody activity across species.</title>
        <authorList>
            <person name="Keech C.L."/>
            <person name="Gordon T.P."/>
            <person name="McCluskey J."/>
        </authorList>
    </citation>
    <scope>NUCLEOTIDE SEQUENCE [MRNA] (ISOFORM 1)</scope>
</reference>
<reference key="5">
    <citation type="journal article" date="1999" name="Genomics">
        <title>A 1.4-Mb high-resolution physical map and contig of chromosome segment 11p15.5 and genes in the LOH11A metastasis suppressor region.</title>
        <authorList>
            <person name="Bepler G."/>
            <person name="O'Briant K.C."/>
            <person name="Kim Y.-C."/>
            <person name="Schreiber G."/>
            <person name="Pitterle D.M."/>
        </authorList>
    </citation>
    <scope>NUCLEOTIDE SEQUENCE [GENOMIC DNA]</scope>
    <scope>VARIANT ARG-96</scope>
</reference>
<reference key="6">
    <citation type="submission" date="2004-09" db="EMBL/GenBank/DDBJ databases">
        <title>Isolation of human Sjogren syndrome type A antigen cDNA clone from HEp-2 cells, isolate 1.</title>
        <authorList>
            <person name="Chen Y.-J."/>
            <person name="Fan Y.-H."/>
            <person name="Chiou S.-H."/>
        </authorList>
    </citation>
    <scope>NUCLEOTIDE SEQUENCE [MRNA] (ISOFORM 1)</scope>
</reference>
<reference key="7">
    <citation type="journal article" date="2006" name="Nature">
        <title>Human chromosome 11 DNA sequence and analysis including novel gene identification.</title>
        <authorList>
            <person name="Taylor T.D."/>
            <person name="Noguchi H."/>
            <person name="Totoki Y."/>
            <person name="Toyoda A."/>
            <person name="Kuroki Y."/>
            <person name="Dewar K."/>
            <person name="Lloyd C."/>
            <person name="Itoh T."/>
            <person name="Takeda T."/>
            <person name="Kim D.-W."/>
            <person name="She X."/>
            <person name="Barlow K.F."/>
            <person name="Bloom T."/>
            <person name="Bruford E."/>
            <person name="Chang J.L."/>
            <person name="Cuomo C.A."/>
            <person name="Eichler E."/>
            <person name="FitzGerald M.G."/>
            <person name="Jaffe D.B."/>
            <person name="LaButti K."/>
            <person name="Nicol R."/>
            <person name="Park H.-S."/>
            <person name="Seaman C."/>
            <person name="Sougnez C."/>
            <person name="Yang X."/>
            <person name="Zimmer A.R."/>
            <person name="Zody M.C."/>
            <person name="Birren B.W."/>
            <person name="Nusbaum C."/>
            <person name="Fujiyama A."/>
            <person name="Hattori M."/>
            <person name="Rogers J."/>
            <person name="Lander E.S."/>
            <person name="Sakaki Y."/>
        </authorList>
    </citation>
    <scope>NUCLEOTIDE SEQUENCE [LARGE SCALE GENOMIC DNA]</scope>
</reference>
<reference key="8">
    <citation type="journal article" date="2004" name="Genome Res.">
        <title>The status, quality, and expansion of the NIH full-length cDNA project: the Mammalian Gene Collection (MGC).</title>
        <authorList>
            <consortium name="The MGC Project Team"/>
        </authorList>
    </citation>
    <scope>NUCLEOTIDE SEQUENCE [LARGE SCALE MRNA] (ISOFORM 1)</scope>
    <source>
        <tissue>Pancreas</tissue>
    </source>
</reference>
<reference key="9">
    <citation type="journal article" date="1995" name="J. Exp. Med.">
        <title>52-kD SS-A/Ro: genomic structure and identification of an alternatively spliced transcript encoding a novel leucine zipper-minus autoantigen expressed in fetal and adult heart.</title>
        <authorList>
            <person name="Chan E.K."/>
            <person name="Di Donato F."/>
            <person name="Hamel J.C."/>
            <person name="Tseng C.E."/>
            <person name="Buyon J.P."/>
        </authorList>
    </citation>
    <scope>ALTERNATIVE SPLICING (ISOFORMS 1 AND 2)</scope>
</reference>
<reference key="10">
    <citation type="journal article" date="1996" name="J. Immunol.">
        <title>Calreticulin binds hYRNA and the 52-kDa polypeptide component of the Ro/SS-A ribonucleoprotein autoantigen.</title>
        <authorList>
            <person name="Cheng S.T."/>
            <person name="Nguyen T.Q."/>
            <person name="Yang Y.S."/>
            <person name="Capra J.D."/>
            <person name="Sontheimer R.D."/>
        </authorList>
    </citation>
    <scope>FUNCTION</scope>
    <scope>INTERACTION WITH CALR</scope>
</reference>
<reference key="11">
    <citation type="journal article" date="2003" name="Clin. Exp. Immunol.">
        <title>Association of stress proteins with autoantigens: a possible mechanism for triggering autoimmunity?</title>
        <authorList>
            <person name="Purcell A.W."/>
            <person name="Todd A."/>
            <person name="Kinoshita G."/>
            <person name="Lynch T.A."/>
            <person name="Keech C.L."/>
            <person name="Gething M.J."/>
            <person name="Gordon T.P."/>
        </authorList>
    </citation>
    <scope>INTERACTION WITH HSPA5</scope>
</reference>
<reference key="12">
    <citation type="journal article" date="2006" name="Biochem. Biophys. Res. Commun.">
        <title>Autoantigen Ro52 is an E3 ubiquitin ligase.</title>
        <authorList>
            <person name="Wada K."/>
            <person name="Kamitani T."/>
        </authorList>
    </citation>
    <scope>FUNCTION</scope>
    <scope>AUTOUBIQUITINATION</scope>
    <scope>MUTAGENESIS OF CYS-16</scope>
</reference>
<reference key="13">
    <citation type="journal article" date="2006" name="Biochem. Biophys. Res. Commun.">
        <title>Oncogenic protein UnpEL/Usp4 deubiquitinates Ro52 by its isopeptidase activity.</title>
        <authorList>
            <person name="Wada K."/>
            <person name="Tanji K."/>
            <person name="Kamitani T."/>
        </authorList>
    </citation>
    <scope>FUNCTION</scope>
    <scope>DEUBIQUITINATION BY USP4</scope>
</reference>
<reference key="14">
    <citation type="journal article" date="2006" name="Biochem. Biophys. Res. Commun.">
        <title>UnpEL/Usp4 is ubiquitinated by Ro52 and deubiquitinated by itself.</title>
        <authorList>
            <person name="Wada K."/>
            <person name="Kamitani T."/>
        </authorList>
    </citation>
    <scope>FUNCTION</scope>
    <scope>AUTOUBIQUITINATION</scope>
    <scope>DEUBIQUITINATION BY USP4</scope>
    <scope>MUTAGENESIS OF CYS-16</scope>
</reference>
<reference key="15">
    <citation type="journal article" date="2006" name="Mol. Cell. Biol.">
        <title>Regulation of p27 degradation and S-phase progression by Ro52 RING finger protein.</title>
        <authorList>
            <person name="Sabile A."/>
            <person name="Meyer A.M."/>
            <person name="Wirbelauer C."/>
            <person name="Hess D."/>
            <person name="Kogel U."/>
            <person name="Scheffner M."/>
            <person name="Krek W."/>
        </authorList>
    </citation>
    <scope>FUNCTION</scope>
    <scope>AUTOUBIQUITINATION</scope>
    <scope>INTERACTION WITH THE SCF(SKP2)-LIKE COMPLEX</scope>
    <scope>INTERACTION WITH SKP2; SKP1; CUL1 AND FBXW11</scope>
</reference>
<reference key="16">
    <citation type="journal article" date="2007" name="Virology">
        <title>Unique features of TRIM5alpha among closely related human TRIM family members.</title>
        <authorList>
            <person name="Li X."/>
            <person name="Gold B."/>
            <person name="O'hUigin C."/>
            <person name="Diaz-Griffero F."/>
            <person name="Song B."/>
            <person name="Si Z."/>
            <person name="Li Y."/>
            <person name="Yuan W."/>
            <person name="Stremlau M."/>
            <person name="Mische C."/>
            <person name="Javanbakht H."/>
            <person name="Scally M."/>
            <person name="Winkler C."/>
            <person name="Dean M."/>
            <person name="Sodroski J."/>
        </authorList>
    </citation>
    <scope>HOMOMERIZATION</scope>
    <scope>SUBCELLULAR LOCATION</scope>
</reference>
<reference key="17">
    <citation type="journal article" date="2008" name="Biochem. Biophys. Res. Commun.">
        <title>SSA/Ro52 autoantigen interacts with Dcp2 to enhance its decapping activity.</title>
        <authorList>
            <person name="Yamochi T."/>
            <person name="Ohnuma K."/>
            <person name="Hosono O."/>
            <person name="Tanaka H."/>
            <person name="Kanai Y."/>
            <person name="Morimoto C."/>
        </authorList>
    </citation>
    <scope>FUNCTION</scope>
    <scope>INTERACTION WITH DCP2</scope>
    <scope>SUBCELLULAR LOCATION</scope>
</reference>
<reference key="18">
    <citation type="journal article" date="2008" name="Exp. Cell Res.">
        <title>The autoantigen Ro52 is an E3 ligase resident in the cytoplasm but enters the nucleus upon cellular exposure to nitric oxide.</title>
        <authorList>
            <person name="Espinosa A."/>
            <person name="Oke V."/>
            <person name="Elfving A."/>
            <person name="Nyberg F."/>
            <person name="Covacu R."/>
            <person name="Wahren-Herlenius M."/>
        </authorList>
    </citation>
    <scope>FUNCTION</scope>
    <scope>SUBCELLULAR LOCATION</scope>
    <scope>COILED-COIL DOMAIN</scope>
    <scope>DOMAIN B30.2/SPRY</scope>
</reference>
<reference key="19">
    <citation type="journal article" date="2008" name="J. Immunol.">
        <title>The E3 ubiquitin ligase Ro52 negatively regulates IFN-beta production post-pathogen recognition by polyubiquitin-mediated degradation of IRF3.</title>
        <authorList>
            <person name="Higgs R."/>
            <person name="Ni Gabhann J."/>
            <person name="Ben Larbi N."/>
            <person name="Breen E.P."/>
            <person name="Fitzgerald K.A."/>
            <person name="Jefferies C.A."/>
        </authorList>
    </citation>
    <scope>FUNCTION</scope>
    <scope>INTERACTION WITH IRF3</scope>
</reference>
<reference key="20">
    <citation type="journal article" date="2008" name="Mol. Immunol.">
        <title>Ro52 functionally interacts with IgG1 and regulates its quality control via the ERAD system.</title>
        <authorList>
            <person name="Takahata M."/>
            <person name="Bohgaki M."/>
            <person name="Tsukiyama T."/>
            <person name="Kondo T."/>
            <person name="Asaka M."/>
            <person name="Hatakeyama S."/>
        </authorList>
    </citation>
    <scope>FUNCTION</scope>
    <scope>INTERACTION WITH VCP</scope>
    <scope>AUTOUBIQUITINATION</scope>
    <scope>SUBCELLULAR LOCATION</scope>
</reference>
<reference key="21">
    <citation type="journal article" date="2008" name="Proc. Natl. Acad. Sci. U.S.A.">
        <title>A quantitative atlas of mitotic phosphorylation.</title>
        <authorList>
            <person name="Dephoure N."/>
            <person name="Zhou C."/>
            <person name="Villen J."/>
            <person name="Beausoleil S.A."/>
            <person name="Bakalarski C.E."/>
            <person name="Elledge S.J."/>
            <person name="Gygi S.P."/>
        </authorList>
    </citation>
    <scope>PHOSPHORYLATION [LARGE SCALE ANALYSIS] AT SER-266</scope>
    <scope>IDENTIFICATION BY MASS SPECTROMETRY [LARGE SCALE ANALYSIS]</scope>
    <source>
        <tissue>Cervix carcinoma</tissue>
    </source>
</reference>
<reference key="22">
    <citation type="journal article" date="2009" name="J. Biochem.">
        <title>Ro52-mediated monoubiquitination of IKK{beta} down-regulates NF-{kappa}B signalling.</title>
        <authorList>
            <person name="Wada K."/>
            <person name="Niida M."/>
            <person name="Tanaka M."/>
            <person name="Kamitani T."/>
        </authorList>
    </citation>
    <scope>FUNCTION</scope>
    <scope>INTERACTION WITH IKBKB</scope>
    <scope>MUTAGENESIS OF CYS-16</scope>
</reference>
<reference key="23">
    <citation type="journal article" date="2010" name="Am. J. Transl. Res.">
        <title>Extraordinary antigenicity of the human Ro52 autoantigen.</title>
        <authorList>
            <person name="Burbelo P.D."/>
            <person name="Ching K.H."/>
            <person name="Han B.L."/>
            <person name="Bush E.R."/>
            <person name="Reeves W.H."/>
            <person name="Iadarola M.J."/>
        </authorList>
    </citation>
    <scope>ANTIGENICITY</scope>
</reference>
<reference key="24">
    <citation type="journal article" date="2010" name="Histochem. Cell Biol.">
        <title>Dynamic movements of Ro52 cytoplasmic bodies along microtubules.</title>
        <authorList>
            <person name="Tanaka M."/>
            <person name="Tanji K."/>
            <person name="Niida M."/>
            <person name="Kamitani T."/>
        </authorList>
    </citation>
    <scope>SUBCELLULAR LOCATION</scope>
</reference>
<reference key="25">
    <citation type="journal article" date="2010" name="Sci. Signal.">
        <title>Quantitative phosphoproteomics reveals widespread full phosphorylation site occupancy during mitosis.</title>
        <authorList>
            <person name="Olsen J.V."/>
            <person name="Vermeulen M."/>
            <person name="Santamaria A."/>
            <person name="Kumar C."/>
            <person name="Miller M.L."/>
            <person name="Jensen L.J."/>
            <person name="Gnad F."/>
            <person name="Cox J."/>
            <person name="Jensen T.S."/>
            <person name="Nigg E.A."/>
            <person name="Brunak S."/>
            <person name="Mann M."/>
        </authorList>
    </citation>
    <scope>PHOSPHORYLATION [LARGE SCALE ANALYSIS] AT SER-266</scope>
    <scope>IDENTIFICATION BY MASS SPECTROMETRY [LARGE SCALE ANALYSIS]</scope>
    <source>
        <tissue>Cervix carcinoma</tissue>
    </source>
</reference>
<reference key="26">
    <citation type="journal article" date="2011" name="Sci. Signal.">
        <title>System-wide temporal characterization of the proteome and phosphoproteome of human embryonic stem cell differentiation.</title>
        <authorList>
            <person name="Rigbolt K.T."/>
            <person name="Prokhorova T.A."/>
            <person name="Akimov V."/>
            <person name="Henningsen J."/>
            <person name="Johansen P.T."/>
            <person name="Kratchmarova I."/>
            <person name="Kassem M."/>
            <person name="Mann M."/>
            <person name="Olsen J.V."/>
            <person name="Blagoev B."/>
        </authorList>
    </citation>
    <scope>PHOSPHORYLATION [LARGE SCALE ANALYSIS] AT SER-266</scope>
    <scope>IDENTIFICATION BY MASS SPECTROMETRY [LARGE SCALE ANALYSIS]</scope>
</reference>
<reference key="27">
    <citation type="journal article" date="2013" name="J. Proteome Res.">
        <title>Toward a comprehensive characterization of a human cancer cell phosphoproteome.</title>
        <authorList>
            <person name="Zhou H."/>
            <person name="Di Palma S."/>
            <person name="Preisinger C."/>
            <person name="Peng M."/>
            <person name="Polat A.N."/>
            <person name="Heck A.J."/>
            <person name="Mohammed S."/>
        </authorList>
    </citation>
    <scope>PHOSPHORYLATION [LARGE SCALE ANALYSIS] AT SER-266</scope>
    <scope>IDENTIFICATION BY MASS SPECTROMETRY [LARGE SCALE ANALYSIS]</scope>
    <source>
        <tissue>Cervix carcinoma</tissue>
        <tissue>Erythroleukemia</tissue>
    </source>
</reference>
<reference key="28">
    <citation type="journal article" date="2015" name="J. Cell Biol.">
        <title>TRIM-mediated precision autophagy targets cytoplasmic regulators of innate immunity.</title>
        <authorList>
            <person name="Kimura T."/>
            <person name="Jain A."/>
            <person name="Choi S.W."/>
            <person name="Mandell M.A."/>
            <person name="Schroder K."/>
            <person name="Johansen T."/>
            <person name="Deretic V."/>
        </authorList>
    </citation>
    <scope>FUNCTION</scope>
    <scope>INDUCTION BY IFNG</scope>
    <scope>INTERACTION WITH MEFV; BECN1; GABARAP; GABARAPL1; GABARAPL2; IRF3; MAP1LC3C; SQSTM1 AND ULK1</scope>
    <scope>SUBCELLULAR LOCATION</scope>
</reference>
<reference key="29">
    <citation type="journal article" date="2015" name="Virology">
        <title>Trim21 regulates Nmi-IFI35 complex-mediated inhibition of innate antiviral response.</title>
        <authorList>
            <person name="Das A."/>
            <person name="Dinh P.X."/>
            <person name="Pattnaik A.K."/>
        </authorList>
    </citation>
    <scope>FUNCTION</scope>
    <scope>INTERACTION WITH NMI AND IFI35</scope>
    <scope>DOMAIN</scope>
</reference>
<reference key="30">
    <citation type="journal article" date="2018" name="J. Virol.">
        <title>TRIM21 Promotes Innate Immune Response to RNA Viral Infection through Lys27-Linked Polyubiquitination of MAVS.</title>
        <authorList>
            <person name="Xue B."/>
            <person name="Li H."/>
            <person name="Guo M."/>
            <person name="Wang J."/>
            <person name="Xu Y."/>
            <person name="Zou X."/>
            <person name="Deng R."/>
            <person name="Li G."/>
            <person name="Zhu H."/>
        </authorList>
    </citation>
    <scope>FUNCTION</scope>
    <scope>CATALYTIC ACTIVITY</scope>
</reference>
<reference key="31">
    <citation type="journal article" date="2020" name="J. Virol.">
        <title>Severe Fever with Thrombocytopenia Syndrome Virus NSs Interacts with TRIM21 To Activate the p62-Keap1-Nrf2 Pathway.</title>
        <authorList>
            <person name="Choi Y."/>
            <person name="Jiang Z."/>
            <person name="Shin W.J."/>
            <person name="Jung J.U."/>
        </authorList>
    </citation>
    <scope>INTERACTION WITH SFTSV VIRUS NSS (MICROBIAL INFECTION)</scope>
</reference>
<reference key="32">
    <citation type="journal article" date="2022" name="Cells">
        <title>FIP200 Methylation by SETD2 Prevents Trim21-Induced Degradation and Preserves Autophagy Initiation.</title>
        <authorList>
            <person name="Dai Y."/>
            <person name="Luo W."/>
            <person name="Li W."/>
            <person name="Chen Z."/>
            <person name="Wang X."/>
            <person name="Chang J."/>
        </authorList>
    </citation>
    <scope>FUNCTION</scope>
    <scope>CATALYTIC ACTIVITY</scope>
    <scope>PATHWAY</scope>
</reference>
<reference key="33">
    <citation type="journal article" date="2022" name="J. Immunol.">
        <title>TRIM21 Regulates Virus-Induced Cell Pyroptosis through Polyubiquitination of ISG12a.</title>
        <authorList>
            <person name="Guo M."/>
            <person name="Cao W."/>
            <person name="Chen S."/>
            <person name="Tian R."/>
            <person name="Xue B."/>
            <person name="Wang L."/>
            <person name="Liu Q."/>
            <person name="Deng R."/>
            <person name="Wang X."/>
            <person name="Wang Z."/>
            <person name="Zhang Y."/>
            <person name="Yang D."/>
            <person name="Zuo C."/>
            <person name="Li G."/>
            <person name="Tang S."/>
            <person name="Zhu H."/>
        </authorList>
    </citation>
    <scope>FUNCTION</scope>
    <scope>CATALYTIC ACTIVITY</scope>
    <scope>PATHWAY</scope>
    <scope>SUBCELLULAR LOCATION</scope>
    <scope>MUTAGENESIS OF CYS-16</scope>
</reference>
<reference key="34">
    <citation type="journal article" date="2023" name="Autophagy">
        <title>Stress granule homeostasis is modulated by TRIM21-mediated ubiquitination of G3BP1 and autophagy-dependent elimination of stress granules.</title>
        <authorList>
            <person name="Yang C."/>
            <person name="Wang Z."/>
            <person name="Kang Y."/>
            <person name="Yi Q."/>
            <person name="Wang T."/>
            <person name="Bai Y."/>
            <person name="Liu Y."/>
        </authorList>
    </citation>
    <scope>FUNCTION</scope>
    <scope>CATALYTIC ACTIVITY</scope>
    <scope>PATHWAY</scope>
    <scope>SUBCELLULAR LOCATION</scope>
    <scope>MUTAGENESIS OF CYS-16 AND 31-CYS--HIS-33</scope>
</reference>
<comment type="function">
    <text evidence="2 8 9 10 11 13 14 15 16 17 18 20 21 22 24 25 26 27">E3 ubiquitin-protein ligase whose activity is dependent on E2 enzymes, UBE2D1, UBE2D2, UBE2E1 and UBE2E2 (PubMed:16297862, PubMed:16316627, PubMed:16472766, PubMed:16880511, PubMed:18022694, PubMed:18361920, PubMed:18641315, PubMed:18845142, PubMed:19675099, PubMed:26347139). Forms a ubiquitin ligase complex in cooperation with the E2 UBE2D2 that is used not only for the ubiquitination of USP4 and IKBKB but also for its self-ubiquitination (PubMed:16880511, PubMed:19675099). Component of cullin-RING-based SCF (SKP1-CUL1-F-box protein) E3 ubiquitin-protein ligase complexes such as SCF(SKP2)-like complexes (PubMed:16880511). A TRIM21-containing SCF(SKP2)-like complex is shown to mediate ubiquitination of CDKN1B ('Thr-187' phosphorylated-form), thereby promoting its degradation by the proteasome (PubMed:16880511). Monoubiquitinates IKBKB that will negatively regulates Tax-induced NF-kappa-B signaling (PubMed:19675099). Negatively regulates IFN-beta production post-pathogen recognition by catalyzing polyubiquitin-mediated degradation of IRF3 (PubMed:18641315). Mediates the ubiquitin-mediated proteasomal degradation of IgG1 heavy chain, which is linked to the VCP-mediated ER-associated degradation (ERAD) pathway (PubMed:18022694). Promotes IRF8 ubiquitination, which enhanced the ability of IRF8 to stimulate cytokine genes transcription in macrophages (By similarity). Plays a role in the regulation of the cell cycle progression (PubMed:16880511). Enhances the decapping activity of DCP2 (PubMed:18361920). Exists as a ribonucleoprotein particle present in all mammalian cells studied and composed of a single polypeptide and one of four small RNA molecules (PubMed:1985094, PubMed:8666824). At least two isoforms are present in nucleated and red blood cells, and tissue specific differences in RO/SSA proteins have been identified (PubMed:8666824). The common feature of these proteins is their ability to bind HY RNAs.2 (PubMed:8666824). Involved in the regulation of innate immunity and the inflammatory response in response to IFNG/IFN-gamma (PubMed:26347139). Organizes autophagic machinery by serving as a platform for the assembly of ULK1, Beclin 1/BECN1 and ATG8 family members and recognizes specific autophagy targets, thus coordinating target recognition with assembly of the autophagic apparatus and initiation of autophagy (PubMed:26347139). Also regulates autophagy through FIP200/RB1CC1 ubiquitination and subsequent decreased protein stability (PubMed:36359729). Represses the innate antiviral response by facilitating the formation of the NMI-IFI35 complex through 'Lys-63'-linked ubiquitination of NMI (PubMed:26342464). During viral infection, promotes cell pyroptosis by mediating 'Lys-6'-linked ubiquitination of ISG12a/IFI27, facilitating its translocation into the mitochondria and subsequent CASP3 activation (PubMed:36426955). When up-regulated through the IFN/JAK/STAT signaling pathway, promotes 'Lys-27'-linked ubiquitination of MAVS, leading to the recruitment of TBK1 and up-regulation of innate immunity (PubMed:29743353). Mediates 'Lys-63'-linked polyubiquitination of G3BP1 in response to heat shock, leading to stress granule disassembly (PubMed:36692217).</text>
</comment>
<comment type="catalytic activity">
    <reaction evidence="24 25 26">
        <text>S-ubiquitinyl-[E2 ubiquitin-conjugating enzyme]-L-cysteine + [acceptor protein]-L-lysine = [E2 ubiquitin-conjugating enzyme]-L-cysteine + N(6)-ubiquitinyl-[acceptor protein]-L-lysine.</text>
        <dbReference type="EC" id="2.3.2.27"/>
    </reaction>
</comment>
<comment type="pathway">
    <text evidence="24 25 26">Protein modification; protein ubiquitination.</text>
</comment>
<comment type="subunit">
    <text evidence="1 7 11 12 13 14 15 17 20 21 27">Homotrimer (PubMed:17156811, PubMed:26347139). Interacts (via C-terminus) with IRF8 (via C-terminus) (By similarity). Component of a SCF(SKP2)-like complex containing CUL1, SKP1, TRIM21 and SKP2. Interacts with CALR, CUL1, FBXW11, HSPA5, IKBKB, IRF3, SKP1 and VCP. Interacts with SKP2; the interaction with SKP2 does not depend on an intact F-box domain. Interacts (via N-terminus and C-terminus) with DCP2 (via N-terminus and C-terminus). Interacts with ULK1, BECN1 and with ATG8 family members, including GABARAP, GABARAPL1, GABARAPL2 and MAP1LC3C/LC3C. Interacts with TRIM21 and SQSTM1/sequestosome 1. Interacts with IRF3 (By similarity) (PubMed:12699405, PubMed:16880511, PubMed:17156811, PubMed:18022694, PubMed:18361920, PubMed:18641315, PubMed:19675099, PubMed:26347139, PubMed:8666824). Interacts (via the SPRY domain) with NMI (via coiled-coil domain); the interaction promotes 'Lys-63'-linked ubiquitination of NMI (PubMed:26342464). Interacts with IFI35 and NMI; the interaction facilitates NMI-IFI35 complex formation (PubMed:26342464).</text>
</comment>
<comment type="subunit">
    <text evidence="23">(Microbial infection) Interacts (via B30.2/SPRY domain) with severe fever with thrombocytopenia syndrome virus (SFTSV) NSs; this interaction activates NFE2L2-mediated transcriptional activation of antioxidant genes.</text>
</comment>
<comment type="interaction">
    <interactant intactId="EBI-81290">
        <id>P19474</id>
    </interactant>
    <interactant intactId="EBI-12150557">
        <id>O15296</id>
        <label>ALOX15B</label>
    </interactant>
    <organismsDiffer>false</organismsDiffer>
    <experiments>3</experiments>
</comment>
<comment type="interaction">
    <interactant intactId="EBI-81290">
        <id>P19474</id>
    </interactant>
    <interactant intactId="EBI-4392727">
        <id>O00257-3</id>
        <label>CBX4</label>
    </interactant>
    <organismsDiffer>false</organismsDiffer>
    <experiments>3</experiments>
</comment>
<comment type="interaction">
    <interactant intactId="EBI-81290">
        <id>P19474</id>
    </interactant>
    <interactant intactId="EBI-349854">
        <id>P13569</id>
        <label>CFTR</label>
    </interactant>
    <organismsDiffer>false</organismsDiffer>
    <experiments>24</experiments>
</comment>
<comment type="interaction">
    <interactant intactId="EBI-81290">
        <id>P19474</id>
    </interactant>
    <interactant intactId="EBI-746052">
        <id>Q9NXE8</id>
        <label>CWC25</label>
    </interactant>
    <organismsDiffer>false</organismsDiffer>
    <experiments>3</experiments>
</comment>
<comment type="interaction">
    <interactant intactId="EBI-81290">
        <id>P19474</id>
    </interactant>
    <interactant intactId="EBI-25840379">
        <id>Q14203-5</id>
        <label>DCTN1</label>
    </interactant>
    <organismsDiffer>false</organismsDiffer>
    <experiments>3</experiments>
</comment>
<comment type="interaction">
    <interactant intactId="EBI-81290">
        <id>P19474</id>
    </interactant>
    <interactant intactId="EBI-399105">
        <id>Q9NPF5</id>
        <label>DMAP1</label>
    </interactant>
    <organismsDiffer>false</organismsDiffer>
    <experiments>3</experiments>
</comment>
<comment type="interaction">
    <interactant intactId="EBI-81290">
        <id>P19474</id>
    </interactant>
    <interactant intactId="EBI-2339219">
        <id>Q08426</id>
        <label>EHHADH</label>
    </interactant>
    <organismsDiffer>false</organismsDiffer>
    <experiments>3</experiments>
</comment>
<comment type="interaction">
    <interactant intactId="EBI-81290">
        <id>P19474</id>
    </interactant>
    <interactant intactId="EBI-2834630">
        <id>P17813</id>
        <label>ENG</label>
    </interactant>
    <organismsDiffer>false</organismsDiffer>
    <experiments>6</experiments>
</comment>
<comment type="interaction">
    <interactant intactId="EBI-81290">
        <id>P19474</id>
    </interactant>
    <interactant intactId="EBI-742102">
        <id>Q8IYI6</id>
        <label>EXOC8</label>
    </interactant>
    <organismsDiffer>false</organismsDiffer>
    <experiments>3</experiments>
</comment>
<comment type="interaction">
    <interactant intactId="EBI-81290">
        <id>P19474</id>
    </interactant>
    <interactant intactId="EBI-348433">
        <id>Q9Y613</id>
        <label>FHOD1</label>
    </interactant>
    <organismsDiffer>false</organismsDiffer>
    <experiments>3</experiments>
</comment>
<comment type="interaction">
    <interactant intactId="EBI-81290">
        <id>P19474</id>
    </interactant>
    <interactant intactId="EBI-2548508">
        <id>Q96IK5</id>
        <label>GMCL1</label>
    </interactant>
    <organismsDiffer>false</organismsDiffer>
    <experiments>3</experiments>
</comment>
<comment type="interaction">
    <interactant intactId="EBI-81290">
        <id>P19474</id>
    </interactant>
    <interactant intactId="EBI-2847510">
        <id>Q13588</id>
        <label>GRAP</label>
    </interactant>
    <organismsDiffer>false</organismsDiffer>
    <experiments>8</experiments>
</comment>
<comment type="interaction">
    <interactant intactId="EBI-81290">
        <id>P19474</id>
    </interactant>
    <interactant intactId="EBI-466029">
        <id>P42858</id>
        <label>HTT</label>
    </interactant>
    <organismsDiffer>false</organismsDiffer>
    <experiments>21</experiments>
</comment>
<comment type="interaction">
    <interactant intactId="EBI-81290">
        <id>P19474</id>
    </interactant>
    <interactant intactId="EBI-11955401">
        <id>Q86VF2-5</id>
        <label>IGFN1</label>
    </interactant>
    <organismsDiffer>false</organismsDiffer>
    <experiments>3</experiments>
</comment>
<comment type="interaction">
    <interactant intactId="EBI-81290">
        <id>P19474</id>
    </interactant>
    <interactant intactId="EBI-739832">
        <id>Q8TBB1</id>
        <label>LNX1</label>
    </interactant>
    <organismsDiffer>false</organismsDiffer>
    <experiments>3</experiments>
</comment>
<comment type="interaction">
    <interactant intactId="EBI-81290">
        <id>P19474</id>
    </interactant>
    <interactant intactId="EBI-21251460">
        <id>O60260-5</id>
        <label>PRKN</label>
    </interactant>
    <organismsDiffer>false</organismsDiffer>
    <experiments>3</experiments>
</comment>
<comment type="interaction">
    <interactant intactId="EBI-81290">
        <id>P19474</id>
    </interactant>
    <interactant intactId="EBI-396669">
        <id>Q9Y3C5</id>
        <label>RNF11</label>
    </interactant>
    <organismsDiffer>false</organismsDiffer>
    <experiments>3</experiments>
</comment>
<comment type="interaction">
    <interactant intactId="EBI-81290">
        <id>P19474</id>
    </interactant>
    <interactant intactId="EBI-985879">
        <id>P37840</id>
        <label>SNCA</label>
    </interactant>
    <organismsDiffer>false</organismsDiffer>
    <experiments>3</experiments>
</comment>
<comment type="interaction">
    <interactant intactId="EBI-81290">
        <id>P19474</id>
    </interactant>
    <interactant intactId="EBI-2555179">
        <id>Q9NUJ3</id>
        <label>TCP11L1</label>
    </interactant>
    <organismsDiffer>false</organismsDiffer>
    <experiments>3</experiments>
</comment>
<comment type="interaction">
    <interactant intactId="EBI-81290">
        <id>P19474</id>
    </interactant>
    <interactant intactId="EBI-7543499">
        <id>Q8IZW8</id>
        <label>TNS4</label>
    </interactant>
    <organismsDiffer>false</organismsDiffer>
    <experiments>3</experiments>
</comment>
<comment type="interaction">
    <interactant intactId="EBI-81290">
        <id>P19474</id>
    </interactant>
    <interactant intactId="EBI-81290">
        <id>P19474</id>
        <label>TRIM21</label>
    </interactant>
    <organismsDiffer>false</organismsDiffer>
    <experiments>8</experiments>
</comment>
<comment type="interaction">
    <interactant intactId="EBI-81290">
        <id>P19474</id>
    </interactant>
    <interactant intactId="EBI-2129889">
        <id>O75382</id>
        <label>TRIM3</label>
    </interactant>
    <organismsDiffer>false</organismsDiffer>
    <experiments>3</experiments>
</comment>
<comment type="interaction">
    <interactant intactId="EBI-81290">
        <id>P19474</id>
    </interactant>
    <interactant intactId="EBI-739510">
        <id>Q9HCM9</id>
        <label>TRIM39</label>
    </interactant>
    <organismsDiffer>false</organismsDiffer>
    <experiments>4</experiments>
</comment>
<comment type="interaction">
    <interactant intactId="EBI-81290">
        <id>P19474</id>
    </interactant>
    <interactant intactId="EBI-11523450">
        <id>Q9HCM9-2</id>
        <label>TRIM39</label>
    </interactant>
    <organismsDiffer>false</organismsDiffer>
    <experiments>3</experiments>
</comment>
<comment type="interaction">
    <interactant intactId="EBI-81290">
        <id>P19474</id>
    </interactant>
    <interactant intactId="EBI-2932492">
        <id>Q99757</id>
        <label>TXN2</label>
    </interactant>
    <organismsDiffer>false</organismsDiffer>
    <experiments>6</experiments>
</comment>
<comment type="interaction">
    <interactant intactId="EBI-81290">
        <id>P19474</id>
    </interactant>
    <interactant intactId="EBI-10180829">
        <id>Q7KZS0</id>
        <label>UBE2I</label>
    </interactant>
    <organismsDiffer>false</organismsDiffer>
    <experiments>6</experiments>
</comment>
<comment type="interaction">
    <interactant intactId="EBI-81290">
        <id>P19474</id>
    </interactant>
    <interactant intactId="EBI-714860">
        <id>P09936</id>
        <label>UCHL1</label>
    </interactant>
    <organismsDiffer>false</organismsDiffer>
    <experiments>3</experiments>
</comment>
<comment type="interaction">
    <interactant intactId="EBI-81290">
        <id>P19474</id>
    </interactant>
    <interactant intactId="EBI-1043104">
        <id>Q9Y4E8</id>
        <label>USP15</label>
    </interactant>
    <organismsDiffer>false</organismsDiffer>
    <experiments>3</experiments>
</comment>
<comment type="interaction">
    <interactant intactId="EBI-81290">
        <id>P19474</id>
    </interactant>
    <interactant intactId="EBI-723305">
        <id>Q13107-1</id>
        <label>USP4</label>
    </interactant>
    <organismsDiffer>false</organismsDiffer>
    <experiments>3</experiments>
</comment>
<comment type="interaction">
    <interactant intactId="EBI-81290">
        <id>P19474</id>
    </interactant>
    <interactant intactId="EBI-9031083">
        <id>Q9Y2B5</id>
        <label>VPS9D1</label>
    </interactant>
    <organismsDiffer>false</organismsDiffer>
    <experiments>3</experiments>
</comment>
<comment type="interaction">
    <interactant intactId="EBI-81290">
        <id>P19474</id>
    </interactant>
    <interactant intactId="EBI-2815120">
        <id>Q6GPH4</id>
        <label>XAF1</label>
    </interactant>
    <organismsDiffer>false</organismsDiffer>
    <experiments>3</experiments>
</comment>
<comment type="interaction">
    <interactant intactId="EBI-81290">
        <id>P19474</id>
    </interactant>
    <interactant intactId="EBI-10300345">
        <id>Q9BW85</id>
        <label>YJU2</label>
    </interactant>
    <organismsDiffer>false</organismsDiffer>
    <experiments>3</experiments>
</comment>
<comment type="interaction">
    <interactant intactId="EBI-81290">
        <id>P19474</id>
    </interactant>
    <interactant intactId="EBI-711925">
        <id>Q05516</id>
        <label>ZBTB16</label>
    </interactant>
    <organismsDiffer>false</organismsDiffer>
    <experiments>3</experiments>
</comment>
<comment type="interaction">
    <interactant intactId="EBI-81290">
        <id>P19474</id>
    </interactant>
    <interactant intactId="EBI-26968662">
        <id>P14240</id>
        <label>L</label>
    </interactant>
    <organismsDiffer>true</organismsDiffer>
    <experiments>2</experiments>
</comment>
<comment type="subcellular location">
    <subcellularLocation>
        <location evidence="12 21 25">Cytoplasm</location>
    </subcellularLocation>
    <subcellularLocation>
        <location evidence="21">Cytoplasmic vesicle</location>
        <location evidence="21">Autophagosome</location>
    </subcellularLocation>
    <subcellularLocation>
        <location evidence="12">Nucleus</location>
    </subcellularLocation>
    <subcellularLocation>
        <location evidence="14">Cytoplasm</location>
        <location evidence="14">P-body</location>
    </subcellularLocation>
    <subcellularLocation>
        <location evidence="12">Cytoplasm</location>
        <location evidence="12">Stress granule</location>
    </subcellularLocation>
    <text evidence="14 26">Enters the nucleus upon exposure to nitric oxide (PubMed:18361920). Localizes to small dot- or rod-like structures in the cytoplasm, called processing bodies (P-bodies) that are located underneath the plasma membrane and also diffusely in the cytoplasm (PubMed:18361920). They are located along the microtubules and are highly motile in cells (PubMed:18361920). Colocalizes with DCP2 in P-bodies (PubMed:18361920). Localizes to stress granules in response to oxidative stress (PubMed:36692217).</text>
</comment>
<comment type="alternative products">
    <event type="alternative splicing"/>
    <isoform>
        <id>P19474-1</id>
        <name>1</name>
        <name>Ro52alpha</name>
        <name>52alpha</name>
        <sequence type="displayed"/>
    </isoform>
    <isoform>
        <id>P19474-2</id>
        <name>2</name>
        <name>Ro52beta</name>
        <name>52beta</name>
        <sequence type="described" ref="VSP_039627"/>
    </isoform>
</comment>
<comment type="tissue specificity">
    <text>Isoform 1 and isoform 2 are expressed in fetal and adult heart and fetal lung.</text>
</comment>
<comment type="induction">
    <text evidence="21">Up-regulated by isoform 2 of XBP1. Up-regulated by IFNG/interferon-gamma, with a peak after 2-4 hours of treatment in monocytes/macrophages.</text>
</comment>
<comment type="domain">
    <text evidence="16">The coiled-coil is necessary for the cytoplasmic localization.</text>
</comment>
<comment type="domain">
    <text evidence="16 20">The RING-type zinc finger is necessary for ubiquitination and for the IRF3-driven interferon beta promoter activity. Interacts with SKP2 and CUL1 in a RING finger-independent manner (PubMed:18845142). The RING-type zinc finger is necessary for ubiquitination of NMI (PubMed:26342464).</text>
</comment>
<comment type="domain">
    <text evidence="16 20">The B30.2/SPRY domain is necessary for the cytoplasmic localization, the interaction with IRF3 and for the IRF3-driven interferon beta promoter activity (PubMed:18845142). The B30.2/SPRY domain is necessary for the interaction with NMI (PubMed:26342464).</text>
</comment>
<comment type="PTM">
    <text evidence="8 9 10 11 13">Autoubiquitinated; does not lead to its proteasomal degradation. Deubiquitinated by USP4; leading to its stabilization.</text>
</comment>
<comment type="similarity">
    <text evidence="29">Belongs to the TRIM/RBCC family.</text>
</comment>
<organism>
    <name type="scientific">Homo sapiens</name>
    <name type="common">Human</name>
    <dbReference type="NCBI Taxonomy" id="9606"/>
    <lineage>
        <taxon>Eukaryota</taxon>
        <taxon>Metazoa</taxon>
        <taxon>Chordata</taxon>
        <taxon>Craniata</taxon>
        <taxon>Vertebrata</taxon>
        <taxon>Euteleostomi</taxon>
        <taxon>Mammalia</taxon>
        <taxon>Eutheria</taxon>
        <taxon>Euarchontoglires</taxon>
        <taxon>Primates</taxon>
        <taxon>Haplorrhini</taxon>
        <taxon>Catarrhini</taxon>
        <taxon>Hominidae</taxon>
        <taxon>Homo</taxon>
    </lineage>
</organism>
<name>RO52_HUMAN</name>